<gene>
    <name evidence="1" type="primary">glmM</name>
    <name type="ordered locus">Rxyl_2119</name>
</gene>
<protein>
    <recommendedName>
        <fullName evidence="1">Phosphoglucosamine mutase</fullName>
        <ecNumber evidence="1">5.4.2.10</ecNumber>
    </recommendedName>
</protein>
<comment type="function">
    <text evidence="1">Catalyzes the conversion of glucosamine-6-phosphate to glucosamine-1-phosphate.</text>
</comment>
<comment type="catalytic activity">
    <reaction evidence="1">
        <text>alpha-D-glucosamine 1-phosphate = D-glucosamine 6-phosphate</text>
        <dbReference type="Rhea" id="RHEA:23424"/>
        <dbReference type="ChEBI" id="CHEBI:58516"/>
        <dbReference type="ChEBI" id="CHEBI:58725"/>
        <dbReference type="EC" id="5.4.2.10"/>
    </reaction>
</comment>
<comment type="cofactor">
    <cofactor evidence="1">
        <name>Mg(2+)</name>
        <dbReference type="ChEBI" id="CHEBI:18420"/>
    </cofactor>
    <text evidence="1">Binds 1 Mg(2+) ion per subunit.</text>
</comment>
<comment type="PTM">
    <text evidence="1">Activated by phosphorylation.</text>
</comment>
<comment type="similarity">
    <text evidence="1">Belongs to the phosphohexose mutase family.</text>
</comment>
<reference key="1">
    <citation type="submission" date="2006-06" db="EMBL/GenBank/DDBJ databases">
        <title>Complete sequence of Rubrobacter xylanophilus DSM 9941.</title>
        <authorList>
            <consortium name="US DOE Joint Genome Institute"/>
            <person name="Copeland A."/>
            <person name="Lucas S."/>
            <person name="Lapidus A."/>
            <person name="Barry K."/>
            <person name="Detter J.C."/>
            <person name="Glavina del Rio T."/>
            <person name="Hammon N."/>
            <person name="Israni S."/>
            <person name="Dalin E."/>
            <person name="Tice H."/>
            <person name="Pitluck S."/>
            <person name="Munk A.C."/>
            <person name="Brettin T."/>
            <person name="Bruce D."/>
            <person name="Han C."/>
            <person name="Tapia R."/>
            <person name="Gilna P."/>
            <person name="Schmutz J."/>
            <person name="Larimer F."/>
            <person name="Land M."/>
            <person name="Hauser L."/>
            <person name="Kyrpides N."/>
            <person name="Lykidis A."/>
            <person name="da Costa M.S."/>
            <person name="Rainey F.A."/>
            <person name="Empadinhas N."/>
            <person name="Jolivet E."/>
            <person name="Battista J.R."/>
            <person name="Richardson P."/>
        </authorList>
    </citation>
    <scope>NUCLEOTIDE SEQUENCE [LARGE SCALE GENOMIC DNA]</scope>
    <source>
        <strain>DSM 9941 / JCM 11954 / NBRC 16129 / PRD-1</strain>
    </source>
</reference>
<proteinExistence type="inferred from homology"/>
<feature type="chain" id="PRO_0000305668" description="Phosphoglucosamine mutase">
    <location>
        <begin position="1"/>
        <end position="444"/>
    </location>
</feature>
<feature type="active site" description="Phosphoserine intermediate" evidence="1">
    <location>
        <position position="100"/>
    </location>
</feature>
<feature type="binding site" description="via phosphate group" evidence="1">
    <location>
        <position position="100"/>
    </location>
    <ligand>
        <name>Mg(2+)</name>
        <dbReference type="ChEBI" id="CHEBI:18420"/>
    </ligand>
</feature>
<feature type="binding site" evidence="1">
    <location>
        <position position="234"/>
    </location>
    <ligand>
        <name>Mg(2+)</name>
        <dbReference type="ChEBI" id="CHEBI:18420"/>
    </ligand>
</feature>
<feature type="binding site" evidence="1">
    <location>
        <position position="236"/>
    </location>
    <ligand>
        <name>Mg(2+)</name>
        <dbReference type="ChEBI" id="CHEBI:18420"/>
    </ligand>
</feature>
<feature type="binding site" evidence="1">
    <location>
        <position position="238"/>
    </location>
    <ligand>
        <name>Mg(2+)</name>
        <dbReference type="ChEBI" id="CHEBI:18420"/>
    </ligand>
</feature>
<feature type="modified residue" description="Phosphoserine" evidence="1">
    <location>
        <position position="100"/>
    </location>
</feature>
<name>GLMM_RUBXD</name>
<organism>
    <name type="scientific">Rubrobacter xylanophilus (strain DSM 9941 / JCM 11954 / NBRC 16129 / PRD-1)</name>
    <dbReference type="NCBI Taxonomy" id="266117"/>
    <lineage>
        <taxon>Bacteria</taxon>
        <taxon>Bacillati</taxon>
        <taxon>Actinomycetota</taxon>
        <taxon>Rubrobacteria</taxon>
        <taxon>Rubrobacterales</taxon>
        <taxon>Rubrobacteraceae</taxon>
        <taxon>Rubrobacter</taxon>
    </lineage>
</organism>
<keyword id="KW-0413">Isomerase</keyword>
<keyword id="KW-0460">Magnesium</keyword>
<keyword id="KW-0479">Metal-binding</keyword>
<keyword id="KW-0597">Phosphoprotein</keyword>
<keyword id="KW-1185">Reference proteome</keyword>
<dbReference type="EC" id="5.4.2.10" evidence="1"/>
<dbReference type="EMBL" id="CP000386">
    <property type="protein sequence ID" value="ABG05063.1"/>
    <property type="molecule type" value="Genomic_DNA"/>
</dbReference>
<dbReference type="RefSeq" id="WP_011565078.1">
    <property type="nucleotide sequence ID" value="NC_008148.1"/>
</dbReference>
<dbReference type="SMR" id="Q1AU65"/>
<dbReference type="STRING" id="266117.Rxyl_2119"/>
<dbReference type="KEGG" id="rxy:Rxyl_2119"/>
<dbReference type="eggNOG" id="COG1109">
    <property type="taxonomic scope" value="Bacteria"/>
</dbReference>
<dbReference type="HOGENOM" id="CLU_016950_7_0_11"/>
<dbReference type="PhylomeDB" id="Q1AU65"/>
<dbReference type="Proteomes" id="UP000006637">
    <property type="component" value="Chromosome"/>
</dbReference>
<dbReference type="GO" id="GO:0005829">
    <property type="term" value="C:cytosol"/>
    <property type="evidence" value="ECO:0007669"/>
    <property type="project" value="TreeGrafter"/>
</dbReference>
<dbReference type="GO" id="GO:0000287">
    <property type="term" value="F:magnesium ion binding"/>
    <property type="evidence" value="ECO:0007669"/>
    <property type="project" value="UniProtKB-UniRule"/>
</dbReference>
<dbReference type="GO" id="GO:0008966">
    <property type="term" value="F:phosphoglucosamine mutase activity"/>
    <property type="evidence" value="ECO:0007669"/>
    <property type="project" value="UniProtKB-UniRule"/>
</dbReference>
<dbReference type="GO" id="GO:0004615">
    <property type="term" value="F:phosphomannomutase activity"/>
    <property type="evidence" value="ECO:0007669"/>
    <property type="project" value="TreeGrafter"/>
</dbReference>
<dbReference type="GO" id="GO:0005975">
    <property type="term" value="P:carbohydrate metabolic process"/>
    <property type="evidence" value="ECO:0007669"/>
    <property type="project" value="InterPro"/>
</dbReference>
<dbReference type="GO" id="GO:0009252">
    <property type="term" value="P:peptidoglycan biosynthetic process"/>
    <property type="evidence" value="ECO:0007669"/>
    <property type="project" value="TreeGrafter"/>
</dbReference>
<dbReference type="GO" id="GO:0006048">
    <property type="term" value="P:UDP-N-acetylglucosamine biosynthetic process"/>
    <property type="evidence" value="ECO:0007669"/>
    <property type="project" value="TreeGrafter"/>
</dbReference>
<dbReference type="CDD" id="cd05802">
    <property type="entry name" value="GlmM"/>
    <property type="match status" value="1"/>
</dbReference>
<dbReference type="FunFam" id="3.30.310.50:FF:000001">
    <property type="entry name" value="Phosphoglucosamine mutase"/>
    <property type="match status" value="1"/>
</dbReference>
<dbReference type="FunFam" id="3.40.120.10:FF:000002">
    <property type="entry name" value="Phosphoglucosamine mutase"/>
    <property type="match status" value="1"/>
</dbReference>
<dbReference type="Gene3D" id="3.40.120.10">
    <property type="entry name" value="Alpha-D-Glucose-1,6-Bisphosphate, subunit A, domain 3"/>
    <property type="match status" value="3"/>
</dbReference>
<dbReference type="Gene3D" id="3.30.310.50">
    <property type="entry name" value="Alpha-D-phosphohexomutase, C-terminal domain"/>
    <property type="match status" value="1"/>
</dbReference>
<dbReference type="HAMAP" id="MF_01554_B">
    <property type="entry name" value="GlmM_B"/>
    <property type="match status" value="1"/>
</dbReference>
<dbReference type="InterPro" id="IPR005844">
    <property type="entry name" value="A-D-PHexomutase_a/b/a-I"/>
</dbReference>
<dbReference type="InterPro" id="IPR016055">
    <property type="entry name" value="A-D-PHexomutase_a/b/a-I/II/III"/>
</dbReference>
<dbReference type="InterPro" id="IPR005845">
    <property type="entry name" value="A-D-PHexomutase_a/b/a-II"/>
</dbReference>
<dbReference type="InterPro" id="IPR005846">
    <property type="entry name" value="A-D-PHexomutase_a/b/a-III"/>
</dbReference>
<dbReference type="InterPro" id="IPR005843">
    <property type="entry name" value="A-D-PHexomutase_C"/>
</dbReference>
<dbReference type="InterPro" id="IPR036900">
    <property type="entry name" value="A-D-PHexomutase_C_sf"/>
</dbReference>
<dbReference type="InterPro" id="IPR006352">
    <property type="entry name" value="GlmM_bact"/>
</dbReference>
<dbReference type="InterPro" id="IPR050060">
    <property type="entry name" value="Phosphoglucosamine_mutase"/>
</dbReference>
<dbReference type="NCBIfam" id="TIGR01455">
    <property type="entry name" value="glmM"/>
    <property type="match status" value="1"/>
</dbReference>
<dbReference type="PANTHER" id="PTHR42946:SF1">
    <property type="entry name" value="PHOSPHOGLUCOMUTASE (ALPHA-D-GLUCOSE-1,6-BISPHOSPHATE-DEPENDENT)"/>
    <property type="match status" value="1"/>
</dbReference>
<dbReference type="PANTHER" id="PTHR42946">
    <property type="entry name" value="PHOSPHOHEXOSE MUTASE"/>
    <property type="match status" value="1"/>
</dbReference>
<dbReference type="Pfam" id="PF02878">
    <property type="entry name" value="PGM_PMM_I"/>
    <property type="match status" value="1"/>
</dbReference>
<dbReference type="Pfam" id="PF02879">
    <property type="entry name" value="PGM_PMM_II"/>
    <property type="match status" value="1"/>
</dbReference>
<dbReference type="Pfam" id="PF02880">
    <property type="entry name" value="PGM_PMM_III"/>
    <property type="match status" value="1"/>
</dbReference>
<dbReference type="Pfam" id="PF00408">
    <property type="entry name" value="PGM_PMM_IV"/>
    <property type="match status" value="1"/>
</dbReference>
<dbReference type="SUPFAM" id="SSF55957">
    <property type="entry name" value="Phosphoglucomutase, C-terminal domain"/>
    <property type="match status" value="1"/>
</dbReference>
<dbReference type="SUPFAM" id="SSF53738">
    <property type="entry name" value="Phosphoglucomutase, first 3 domains"/>
    <property type="match status" value="3"/>
</dbReference>
<accession>Q1AU65</accession>
<sequence length="444" mass="46016">MEPKERELAFGTDGVRGVANRGLLPEDALRLGLAAARRFGGTVVIGRDTRLSGGMLSSALAAGVASGGARALDLGVLPTPGAAALAARLGASAAGVVSASHNPYPDNGIKFLSGEGRKLPQRTERELERLARDPFPERPVAGGVGRVEALEDAPEMYAGAVLGALRPEVPGLRVLLDCANGAACAVAPRIFRELGVQLTVVGDAPDGTNINEGCGSTHIERLEVAGHDVAFAFDGDADRVLALDERGRVVDGDRIIAILARDLKERGRLGGGAVVTVMSNLGLLKALESLGIPCEVTPVGDRHVAEAMLRVGASVGGEQSGHIIVAEHATTGDGIVTALALLDVMARTGRSLSELAGVMEVYPQVLVNVRVERDGGAGRVAASGTVERAVEDARRELGERGRIVLRPSGTEPVVRVMVEHEDEEVCRRVCERVAGVVSREGGGG</sequence>
<evidence type="ECO:0000255" key="1">
    <source>
        <dbReference type="HAMAP-Rule" id="MF_01554"/>
    </source>
</evidence>